<evidence type="ECO:0000255" key="1">
    <source>
        <dbReference type="HAMAP-Rule" id="MF_00006"/>
    </source>
</evidence>
<sequence length="464" mass="51801">MSTDKTNQSWGGRFSEPVDAFVARFTASVTFDQRLYRHDIMGSIAHATMLAKVGVLTDAERDTIVDGLNTIQAEIEAGNFEWRVDLEDVHMNIEARLTDRIGITGKKLHTGRSRNDQVATDIRLWLRDEIDLILSEITRLQQGLLGQAEREAETIMPGFTHLQTAQPVTFGHHMLAWFEMLSRDYERLVDCRKRLNRMPLGSAALAGTTYPIDRELTCKLLGFDVVGGNSLDGVSDRDFAIEFCSAASIAMMHLSRFSEELVLWTSAQFQFIDLPDRFCTGSSIMPQKKNPDVPELVRGKSGRVFGALMGLLTLMKGQPLAYNKDNQEDKEPLFDAADTLRDSLRAFADMIPAIKPRHAIMREAALRGFSTATDLADYLVRRGLPFRDCHEIVGHAVKYGVETGKDLAEMSLEELRQFSNQIEQDVFAVLTLEGSVNARNHIGGTAPEQVRAAVVRGQELLAGR</sequence>
<dbReference type="EC" id="4.3.2.1" evidence="1"/>
<dbReference type="EMBL" id="CP000058">
    <property type="protein sequence ID" value="AAZ37507.1"/>
    <property type="molecule type" value="Genomic_DNA"/>
</dbReference>
<dbReference type="RefSeq" id="WP_002551376.1">
    <property type="nucleotide sequence ID" value="NC_005773.3"/>
</dbReference>
<dbReference type="SMR" id="Q48QD3"/>
<dbReference type="GeneID" id="61872769"/>
<dbReference type="KEGG" id="psp:PSPPH_0071"/>
<dbReference type="eggNOG" id="COG0165">
    <property type="taxonomic scope" value="Bacteria"/>
</dbReference>
<dbReference type="HOGENOM" id="CLU_027272_2_3_6"/>
<dbReference type="UniPathway" id="UPA00068">
    <property type="reaction ID" value="UER00114"/>
</dbReference>
<dbReference type="Proteomes" id="UP000000551">
    <property type="component" value="Chromosome"/>
</dbReference>
<dbReference type="GO" id="GO:0005829">
    <property type="term" value="C:cytosol"/>
    <property type="evidence" value="ECO:0007669"/>
    <property type="project" value="TreeGrafter"/>
</dbReference>
<dbReference type="GO" id="GO:0004056">
    <property type="term" value="F:argininosuccinate lyase activity"/>
    <property type="evidence" value="ECO:0007669"/>
    <property type="project" value="UniProtKB-UniRule"/>
</dbReference>
<dbReference type="GO" id="GO:0042450">
    <property type="term" value="P:arginine biosynthetic process via ornithine"/>
    <property type="evidence" value="ECO:0007669"/>
    <property type="project" value="InterPro"/>
</dbReference>
<dbReference type="GO" id="GO:0006526">
    <property type="term" value="P:L-arginine biosynthetic process"/>
    <property type="evidence" value="ECO:0007669"/>
    <property type="project" value="UniProtKB-UniRule"/>
</dbReference>
<dbReference type="CDD" id="cd01359">
    <property type="entry name" value="Argininosuccinate_lyase"/>
    <property type="match status" value="1"/>
</dbReference>
<dbReference type="FunFam" id="1.10.275.10:FF:000002">
    <property type="entry name" value="Argininosuccinate lyase"/>
    <property type="match status" value="1"/>
</dbReference>
<dbReference type="FunFam" id="1.10.40.30:FF:000001">
    <property type="entry name" value="Argininosuccinate lyase"/>
    <property type="match status" value="1"/>
</dbReference>
<dbReference type="FunFam" id="1.20.200.10:FF:000015">
    <property type="entry name" value="argininosuccinate lyase isoform X2"/>
    <property type="match status" value="1"/>
</dbReference>
<dbReference type="Gene3D" id="1.10.40.30">
    <property type="entry name" value="Fumarase/aspartase (C-terminal domain)"/>
    <property type="match status" value="1"/>
</dbReference>
<dbReference type="Gene3D" id="1.20.200.10">
    <property type="entry name" value="Fumarase/aspartase (Central domain)"/>
    <property type="match status" value="1"/>
</dbReference>
<dbReference type="Gene3D" id="1.10.275.10">
    <property type="entry name" value="Fumarase/aspartase (N-terminal domain)"/>
    <property type="match status" value="1"/>
</dbReference>
<dbReference type="HAMAP" id="MF_00006">
    <property type="entry name" value="Arg_succ_lyase"/>
    <property type="match status" value="1"/>
</dbReference>
<dbReference type="InterPro" id="IPR029419">
    <property type="entry name" value="Arg_succ_lyase_C"/>
</dbReference>
<dbReference type="InterPro" id="IPR009049">
    <property type="entry name" value="Argininosuccinate_lyase"/>
</dbReference>
<dbReference type="InterPro" id="IPR024083">
    <property type="entry name" value="Fumarase/histidase_N"/>
</dbReference>
<dbReference type="InterPro" id="IPR020557">
    <property type="entry name" value="Fumarate_lyase_CS"/>
</dbReference>
<dbReference type="InterPro" id="IPR000362">
    <property type="entry name" value="Fumarate_lyase_fam"/>
</dbReference>
<dbReference type="InterPro" id="IPR022761">
    <property type="entry name" value="Fumarate_lyase_N"/>
</dbReference>
<dbReference type="InterPro" id="IPR008948">
    <property type="entry name" value="L-Aspartase-like"/>
</dbReference>
<dbReference type="NCBIfam" id="TIGR00838">
    <property type="entry name" value="argH"/>
    <property type="match status" value="1"/>
</dbReference>
<dbReference type="PANTHER" id="PTHR43814">
    <property type="entry name" value="ARGININOSUCCINATE LYASE"/>
    <property type="match status" value="1"/>
</dbReference>
<dbReference type="PANTHER" id="PTHR43814:SF1">
    <property type="entry name" value="ARGININOSUCCINATE LYASE"/>
    <property type="match status" value="1"/>
</dbReference>
<dbReference type="Pfam" id="PF14698">
    <property type="entry name" value="ASL_C2"/>
    <property type="match status" value="1"/>
</dbReference>
<dbReference type="Pfam" id="PF00206">
    <property type="entry name" value="Lyase_1"/>
    <property type="match status" value="1"/>
</dbReference>
<dbReference type="PRINTS" id="PR00145">
    <property type="entry name" value="ARGSUCLYASE"/>
</dbReference>
<dbReference type="PRINTS" id="PR00149">
    <property type="entry name" value="FUMRATELYASE"/>
</dbReference>
<dbReference type="SUPFAM" id="SSF48557">
    <property type="entry name" value="L-aspartase-like"/>
    <property type="match status" value="1"/>
</dbReference>
<dbReference type="PROSITE" id="PS00163">
    <property type="entry name" value="FUMARATE_LYASES"/>
    <property type="match status" value="1"/>
</dbReference>
<comment type="catalytic activity">
    <reaction evidence="1">
        <text>2-(N(omega)-L-arginino)succinate = fumarate + L-arginine</text>
        <dbReference type="Rhea" id="RHEA:24020"/>
        <dbReference type="ChEBI" id="CHEBI:29806"/>
        <dbReference type="ChEBI" id="CHEBI:32682"/>
        <dbReference type="ChEBI" id="CHEBI:57472"/>
        <dbReference type="EC" id="4.3.2.1"/>
    </reaction>
</comment>
<comment type="pathway">
    <text evidence="1">Amino-acid biosynthesis; L-arginine biosynthesis; L-arginine from L-ornithine and carbamoyl phosphate: step 3/3.</text>
</comment>
<comment type="subcellular location">
    <subcellularLocation>
        <location evidence="1">Cytoplasm</location>
    </subcellularLocation>
</comment>
<comment type="similarity">
    <text evidence="1">Belongs to the lyase 1 family. Argininosuccinate lyase subfamily.</text>
</comment>
<proteinExistence type="inferred from homology"/>
<protein>
    <recommendedName>
        <fullName evidence="1">Argininosuccinate lyase</fullName>
        <shortName evidence="1">ASAL</shortName>
        <ecNumber evidence="1">4.3.2.1</ecNumber>
    </recommendedName>
    <alternativeName>
        <fullName evidence="1">Arginosuccinase</fullName>
    </alternativeName>
</protein>
<accession>Q48QD3</accession>
<gene>
    <name evidence="1" type="primary">argH</name>
    <name type="ordered locus">PSPPH_0071</name>
</gene>
<keyword id="KW-0028">Amino-acid biosynthesis</keyword>
<keyword id="KW-0055">Arginine biosynthesis</keyword>
<keyword id="KW-0963">Cytoplasm</keyword>
<keyword id="KW-0456">Lyase</keyword>
<organism>
    <name type="scientific">Pseudomonas savastanoi pv. phaseolicola (strain 1448A / Race 6)</name>
    <name type="common">Pseudomonas syringae pv. phaseolicola (strain 1448A / Race 6)</name>
    <dbReference type="NCBI Taxonomy" id="264730"/>
    <lineage>
        <taxon>Bacteria</taxon>
        <taxon>Pseudomonadati</taxon>
        <taxon>Pseudomonadota</taxon>
        <taxon>Gammaproteobacteria</taxon>
        <taxon>Pseudomonadales</taxon>
        <taxon>Pseudomonadaceae</taxon>
        <taxon>Pseudomonas</taxon>
    </lineage>
</organism>
<name>ARLY_PSE14</name>
<feature type="chain" id="PRO_0000240754" description="Argininosuccinate lyase">
    <location>
        <begin position="1"/>
        <end position="464"/>
    </location>
</feature>
<reference key="1">
    <citation type="journal article" date="2005" name="J. Bacteriol.">
        <title>Whole-genome sequence analysis of Pseudomonas syringae pv. phaseolicola 1448A reveals divergence among pathovars in genes involved in virulence and transposition.</title>
        <authorList>
            <person name="Joardar V."/>
            <person name="Lindeberg M."/>
            <person name="Jackson R.W."/>
            <person name="Selengut J."/>
            <person name="Dodson R."/>
            <person name="Brinkac L.M."/>
            <person name="Daugherty S.C."/>
            <person name="DeBoy R.T."/>
            <person name="Durkin A.S."/>
            <person name="Gwinn Giglio M."/>
            <person name="Madupu R."/>
            <person name="Nelson W.C."/>
            <person name="Rosovitz M.J."/>
            <person name="Sullivan S.A."/>
            <person name="Crabtree J."/>
            <person name="Creasy T."/>
            <person name="Davidsen T.M."/>
            <person name="Haft D.H."/>
            <person name="Zafar N."/>
            <person name="Zhou L."/>
            <person name="Halpin R."/>
            <person name="Holley T."/>
            <person name="Khouri H.M."/>
            <person name="Feldblyum T.V."/>
            <person name="White O."/>
            <person name="Fraser C.M."/>
            <person name="Chatterjee A.K."/>
            <person name="Cartinhour S."/>
            <person name="Schneider D."/>
            <person name="Mansfield J.W."/>
            <person name="Collmer A."/>
            <person name="Buell R."/>
        </authorList>
    </citation>
    <scope>NUCLEOTIDE SEQUENCE [LARGE SCALE GENOMIC DNA]</scope>
    <source>
        <strain>1448A / Race 6</strain>
    </source>
</reference>